<gene>
    <name type="primary">prp28</name>
    <name type="ORF">BC1G_00523</name>
    <name type="ORF">BCIN_01g05140</name>
</gene>
<sequence length="817" mass="89384">MASNGYSNSADAVPPPPSDNDGRPPSPPPPPPDSFVPPPPPSSLAPPPPPSSDLPPPPPSELLPPPPEPKKKKGWGAPKPGPLSIEDILKKKKEADEAAAKPKFLSKAAREKLALEKRAKEVEEQKRKREAEQDNRISIGSVNGNGNGYGSAANGRDGYERSYQQENGRRESSFVPTGPRAMRNSQQSRSSSDKPNDMEPPPKPAKSAAAGTGKASVAGEKRPANAEDLQAALIKTRYMGAETNQSTFSAKKKRRRTTEKKFNFEWNAEEDTSPDYNPIYQNRAEAGLYGRGRLGGFAEDEGATLKYAKALEERDAEAGGARAREIVEMERRRKEDAGRNSLDKHWSEKKLEHMRERDWRIFKEDFNISTKGGAIPNPMRNWSESKLPKRLLDVIHQVGYDEPSAVQRAAIPIALQARDLIGVAVTGSGKTAAFLLPLLVYISELPPLNEFTKNDGPYAIILAPTRELAQQIEVEAKKFATPLGFTCVSIVGGHSLEEQSYNLRNGAEIIIATPGRLVDCIERRVLVLGQCCYIIMDEADRMIDLGFEESVNKILDALPVSNEKPDTDDAEDAQAMSRHLGGKDRYRQTMMYTATMPPAVEKIAKKYLRRPAIVTIGNIGEAVETVEQRVEFVAGEDKRKKRLNEILASGEFAPPIIVFVNIKRNCDAVARDIKHMGFTSVTLHGSKTQEQREAALASVRSGATNVLVATDLAGRGIDVPDVSLVVNFNMATNIESYTHRIGRTGRAGKSGVAITFLGNEDSDTMYDLKQMLTKSSISRVPEELRKHEAAQQKSQRGQGMKKIEEGGFGGKGGGGGW</sequence>
<feature type="chain" id="PRO_0000310207" description="Pre-mRNA-splicing ATP-dependent RNA helicase prp28">
    <location>
        <begin position="1"/>
        <end position="817"/>
    </location>
</feature>
<feature type="domain" description="Helicase ATP-binding" evidence="2">
    <location>
        <begin position="411"/>
        <end position="614"/>
    </location>
</feature>
<feature type="domain" description="Helicase C-terminal" evidence="3">
    <location>
        <begin position="625"/>
        <end position="788"/>
    </location>
</feature>
<feature type="region of interest" description="Disordered" evidence="4">
    <location>
        <begin position="1"/>
        <end position="86"/>
    </location>
</feature>
<feature type="region of interest" description="Disordered" evidence="4">
    <location>
        <begin position="118"/>
        <end position="225"/>
    </location>
</feature>
<feature type="region of interest" description="Disordered" evidence="4">
    <location>
        <begin position="778"/>
        <end position="817"/>
    </location>
</feature>
<feature type="short sequence motif" description="Q motif">
    <location>
        <begin position="380"/>
        <end position="408"/>
    </location>
</feature>
<feature type="short sequence motif" description="DEAD box">
    <location>
        <begin position="537"/>
        <end position="540"/>
    </location>
</feature>
<feature type="compositionally biased region" description="Polar residues" evidence="4">
    <location>
        <begin position="1"/>
        <end position="10"/>
    </location>
</feature>
<feature type="compositionally biased region" description="Pro residues" evidence="4">
    <location>
        <begin position="13"/>
        <end position="67"/>
    </location>
</feature>
<feature type="compositionally biased region" description="Basic and acidic residues" evidence="4">
    <location>
        <begin position="118"/>
        <end position="135"/>
    </location>
</feature>
<feature type="compositionally biased region" description="Low complexity" evidence="4">
    <location>
        <begin position="205"/>
        <end position="218"/>
    </location>
</feature>
<feature type="compositionally biased region" description="Basic and acidic residues" evidence="4">
    <location>
        <begin position="780"/>
        <end position="790"/>
    </location>
</feature>
<feature type="compositionally biased region" description="Gly residues" evidence="4">
    <location>
        <begin position="806"/>
        <end position="817"/>
    </location>
</feature>
<feature type="binding site" evidence="2">
    <location>
        <begin position="424"/>
        <end position="431"/>
    </location>
    <ligand>
        <name>ATP</name>
        <dbReference type="ChEBI" id="CHEBI:30616"/>
    </ligand>
</feature>
<dbReference type="EC" id="3.6.4.13"/>
<dbReference type="EMBL" id="CP009805">
    <property type="protein sequence ID" value="ATZ45796.1"/>
    <property type="molecule type" value="Genomic_DNA"/>
</dbReference>
<dbReference type="RefSeq" id="XP_001561438.1">
    <property type="nucleotide sequence ID" value="XM_001561388.1"/>
</dbReference>
<dbReference type="SMR" id="A6RJA2"/>
<dbReference type="EnsemblFungi" id="Bcin01g05140.1">
    <property type="protein sequence ID" value="Bcin01p05140.1"/>
    <property type="gene ID" value="Bcin01g05140"/>
</dbReference>
<dbReference type="GeneID" id="5442086"/>
<dbReference type="KEGG" id="bfu:BCIN_01g05140"/>
<dbReference type="VEuPathDB" id="FungiDB:Bcin01g05140"/>
<dbReference type="OrthoDB" id="196131at2759"/>
<dbReference type="Proteomes" id="UP000001798">
    <property type="component" value="Chromosome bcin01"/>
</dbReference>
<dbReference type="GO" id="GO:0005737">
    <property type="term" value="C:cytoplasm"/>
    <property type="evidence" value="ECO:0007669"/>
    <property type="project" value="UniProtKB-SubCell"/>
</dbReference>
<dbReference type="GO" id="GO:0005634">
    <property type="term" value="C:nucleus"/>
    <property type="evidence" value="ECO:0007669"/>
    <property type="project" value="UniProtKB-SubCell"/>
</dbReference>
<dbReference type="GO" id="GO:0005524">
    <property type="term" value="F:ATP binding"/>
    <property type="evidence" value="ECO:0007669"/>
    <property type="project" value="UniProtKB-KW"/>
</dbReference>
<dbReference type="GO" id="GO:0016887">
    <property type="term" value="F:ATP hydrolysis activity"/>
    <property type="evidence" value="ECO:0007669"/>
    <property type="project" value="RHEA"/>
</dbReference>
<dbReference type="GO" id="GO:0003676">
    <property type="term" value="F:nucleic acid binding"/>
    <property type="evidence" value="ECO:0007669"/>
    <property type="project" value="InterPro"/>
</dbReference>
<dbReference type="GO" id="GO:0003724">
    <property type="term" value="F:RNA helicase activity"/>
    <property type="evidence" value="ECO:0007669"/>
    <property type="project" value="UniProtKB-EC"/>
</dbReference>
<dbReference type="GO" id="GO:0006397">
    <property type="term" value="P:mRNA processing"/>
    <property type="evidence" value="ECO:0007669"/>
    <property type="project" value="UniProtKB-KW"/>
</dbReference>
<dbReference type="GO" id="GO:0008380">
    <property type="term" value="P:RNA splicing"/>
    <property type="evidence" value="ECO:0007669"/>
    <property type="project" value="UniProtKB-KW"/>
</dbReference>
<dbReference type="CDD" id="cd17945">
    <property type="entry name" value="DEADc_DDX23"/>
    <property type="match status" value="1"/>
</dbReference>
<dbReference type="CDD" id="cd18787">
    <property type="entry name" value="SF2_C_DEAD"/>
    <property type="match status" value="1"/>
</dbReference>
<dbReference type="FunFam" id="3.40.50.300:FF:000322">
    <property type="entry name" value="probable ATP-dependent RNA helicase DDX23"/>
    <property type="match status" value="1"/>
</dbReference>
<dbReference type="Gene3D" id="3.40.50.300">
    <property type="entry name" value="P-loop containing nucleotide triphosphate hydrolases"/>
    <property type="match status" value="2"/>
</dbReference>
<dbReference type="InterPro" id="IPR011545">
    <property type="entry name" value="DEAD/DEAH_box_helicase_dom"/>
</dbReference>
<dbReference type="InterPro" id="IPR014001">
    <property type="entry name" value="Helicase_ATP-bd"/>
</dbReference>
<dbReference type="InterPro" id="IPR001650">
    <property type="entry name" value="Helicase_C-like"/>
</dbReference>
<dbReference type="InterPro" id="IPR027417">
    <property type="entry name" value="P-loop_NTPase"/>
</dbReference>
<dbReference type="InterPro" id="IPR000629">
    <property type="entry name" value="RNA-helicase_DEAD-box_CS"/>
</dbReference>
<dbReference type="InterPro" id="IPR014014">
    <property type="entry name" value="RNA_helicase_DEAD_Q_motif"/>
</dbReference>
<dbReference type="PANTHER" id="PTHR47958">
    <property type="entry name" value="ATP-DEPENDENT RNA HELICASE DBP3"/>
    <property type="match status" value="1"/>
</dbReference>
<dbReference type="Pfam" id="PF25430">
    <property type="entry name" value="DDX23"/>
    <property type="match status" value="1"/>
</dbReference>
<dbReference type="Pfam" id="PF00270">
    <property type="entry name" value="DEAD"/>
    <property type="match status" value="1"/>
</dbReference>
<dbReference type="Pfam" id="PF00271">
    <property type="entry name" value="Helicase_C"/>
    <property type="match status" value="1"/>
</dbReference>
<dbReference type="SMART" id="SM00487">
    <property type="entry name" value="DEXDc"/>
    <property type="match status" value="1"/>
</dbReference>
<dbReference type="SMART" id="SM00490">
    <property type="entry name" value="HELICc"/>
    <property type="match status" value="1"/>
</dbReference>
<dbReference type="SUPFAM" id="SSF52540">
    <property type="entry name" value="P-loop containing nucleoside triphosphate hydrolases"/>
    <property type="match status" value="1"/>
</dbReference>
<dbReference type="PROSITE" id="PS00039">
    <property type="entry name" value="DEAD_ATP_HELICASE"/>
    <property type="match status" value="1"/>
</dbReference>
<dbReference type="PROSITE" id="PS51192">
    <property type="entry name" value="HELICASE_ATP_BIND_1"/>
    <property type="match status" value="1"/>
</dbReference>
<dbReference type="PROSITE" id="PS51194">
    <property type="entry name" value="HELICASE_CTER"/>
    <property type="match status" value="1"/>
</dbReference>
<dbReference type="PROSITE" id="PS51195">
    <property type="entry name" value="Q_MOTIF"/>
    <property type="match status" value="1"/>
</dbReference>
<name>PRP28_BOTFB</name>
<accession>A6RJA2</accession>
<accession>A0A384J5F4</accession>
<protein>
    <recommendedName>
        <fullName>Pre-mRNA-splicing ATP-dependent RNA helicase prp28</fullName>
        <ecNumber>3.6.4.13</ecNumber>
    </recommendedName>
</protein>
<organism>
    <name type="scientific">Botryotinia fuckeliana (strain B05.10)</name>
    <name type="common">Noble rot fungus</name>
    <name type="synonym">Botrytis cinerea</name>
    <dbReference type="NCBI Taxonomy" id="332648"/>
    <lineage>
        <taxon>Eukaryota</taxon>
        <taxon>Fungi</taxon>
        <taxon>Dikarya</taxon>
        <taxon>Ascomycota</taxon>
        <taxon>Pezizomycotina</taxon>
        <taxon>Leotiomycetes</taxon>
        <taxon>Helotiales</taxon>
        <taxon>Sclerotiniaceae</taxon>
        <taxon>Botrytis</taxon>
    </lineage>
</organism>
<evidence type="ECO:0000250" key="1"/>
<evidence type="ECO:0000255" key="2">
    <source>
        <dbReference type="PROSITE-ProRule" id="PRU00541"/>
    </source>
</evidence>
<evidence type="ECO:0000255" key="3">
    <source>
        <dbReference type="PROSITE-ProRule" id="PRU00542"/>
    </source>
</evidence>
<evidence type="ECO:0000256" key="4">
    <source>
        <dbReference type="SAM" id="MobiDB-lite"/>
    </source>
</evidence>
<evidence type="ECO:0000305" key="5"/>
<reference key="1">
    <citation type="journal article" date="2011" name="PLoS Genet.">
        <title>Genomic analysis of the necrotrophic fungal pathogens Sclerotinia sclerotiorum and Botrytis cinerea.</title>
        <authorList>
            <person name="Amselem J."/>
            <person name="Cuomo C.A."/>
            <person name="van Kan J.A.L."/>
            <person name="Viaud M."/>
            <person name="Benito E.P."/>
            <person name="Couloux A."/>
            <person name="Coutinho P.M."/>
            <person name="de Vries R.P."/>
            <person name="Dyer P.S."/>
            <person name="Fillinger S."/>
            <person name="Fournier E."/>
            <person name="Gout L."/>
            <person name="Hahn M."/>
            <person name="Kohn L."/>
            <person name="Lapalu N."/>
            <person name="Plummer K.M."/>
            <person name="Pradier J.-M."/>
            <person name="Quevillon E."/>
            <person name="Sharon A."/>
            <person name="Simon A."/>
            <person name="ten Have A."/>
            <person name="Tudzynski B."/>
            <person name="Tudzynski P."/>
            <person name="Wincker P."/>
            <person name="Andrew M."/>
            <person name="Anthouard V."/>
            <person name="Beever R.E."/>
            <person name="Beffa R."/>
            <person name="Benoit I."/>
            <person name="Bouzid O."/>
            <person name="Brault B."/>
            <person name="Chen Z."/>
            <person name="Choquer M."/>
            <person name="Collemare J."/>
            <person name="Cotton P."/>
            <person name="Danchin E.G."/>
            <person name="Da Silva C."/>
            <person name="Gautier A."/>
            <person name="Giraud C."/>
            <person name="Giraud T."/>
            <person name="Gonzalez C."/>
            <person name="Grossetete S."/>
            <person name="Gueldener U."/>
            <person name="Henrissat B."/>
            <person name="Howlett B.J."/>
            <person name="Kodira C."/>
            <person name="Kretschmer M."/>
            <person name="Lappartient A."/>
            <person name="Leroch M."/>
            <person name="Levis C."/>
            <person name="Mauceli E."/>
            <person name="Neuveglise C."/>
            <person name="Oeser B."/>
            <person name="Pearson M."/>
            <person name="Poulain J."/>
            <person name="Poussereau N."/>
            <person name="Quesneville H."/>
            <person name="Rascle C."/>
            <person name="Schumacher J."/>
            <person name="Segurens B."/>
            <person name="Sexton A."/>
            <person name="Silva E."/>
            <person name="Sirven C."/>
            <person name="Soanes D.M."/>
            <person name="Talbot N.J."/>
            <person name="Templeton M."/>
            <person name="Yandava C."/>
            <person name="Yarden O."/>
            <person name="Zeng Q."/>
            <person name="Rollins J.A."/>
            <person name="Lebrun M.-H."/>
            <person name="Dickman M."/>
        </authorList>
    </citation>
    <scope>NUCLEOTIDE SEQUENCE [LARGE SCALE GENOMIC DNA]</scope>
    <source>
        <strain>B05.10</strain>
    </source>
</reference>
<reference key="2">
    <citation type="journal article" date="2012" name="Eukaryot. Cell">
        <title>Genome update of Botrytis cinerea strains B05.10 and T4.</title>
        <authorList>
            <person name="Staats M."/>
            <person name="van Kan J.A.L."/>
        </authorList>
    </citation>
    <scope>NUCLEOTIDE SEQUENCE [LARGE SCALE GENOMIC DNA]</scope>
    <scope>GENOME REANNOTATION</scope>
    <source>
        <strain>B05.10</strain>
    </source>
</reference>
<reference key="3">
    <citation type="journal article" date="2017" name="Mol. Plant Pathol.">
        <title>A gapless genome sequence of the fungus Botrytis cinerea.</title>
        <authorList>
            <person name="van Kan J.A.L."/>
            <person name="Stassen J.H.M."/>
            <person name="Mosbach A."/>
            <person name="van der Lee T.A.J."/>
            <person name="Faino L."/>
            <person name="Farmer A.D."/>
            <person name="Papasotiriou D.G."/>
            <person name="Zhou S."/>
            <person name="Seidl M.F."/>
            <person name="Cottam E."/>
            <person name="Edel D."/>
            <person name="Hahn M."/>
            <person name="Schwartz D.C."/>
            <person name="Dietrich R.A."/>
            <person name="Widdison S."/>
            <person name="Scalliet G."/>
        </authorList>
    </citation>
    <scope>NUCLEOTIDE SEQUENCE [LARGE SCALE GENOMIC DNA]</scope>
    <scope>GENOME REANNOTATION</scope>
    <source>
        <strain>B05.10</strain>
    </source>
</reference>
<keyword id="KW-0067">ATP-binding</keyword>
<keyword id="KW-0963">Cytoplasm</keyword>
<keyword id="KW-0347">Helicase</keyword>
<keyword id="KW-0378">Hydrolase</keyword>
<keyword id="KW-0507">mRNA processing</keyword>
<keyword id="KW-0508">mRNA splicing</keyword>
<keyword id="KW-0547">Nucleotide-binding</keyword>
<keyword id="KW-0539">Nucleus</keyword>
<keyword id="KW-1185">Reference proteome</keyword>
<proteinExistence type="inferred from homology"/>
<comment type="function">
    <text evidence="1">ATP-dependent RNA helicase involved in mRNA splicing. May destabilize the U1/5' splice site duplex to permit an effective competition for the 5' splice site by the U6 snRNA, resulting in the switch between U1 and U6 at the 5' splice site. May also act to unwind the U4/U6 base-pairing interaction in the U4/U6/U5 snRNP, facilitating the first covalent step of splicing (By similarity).</text>
</comment>
<comment type="catalytic activity">
    <reaction>
        <text>ATP + H2O = ADP + phosphate + H(+)</text>
        <dbReference type="Rhea" id="RHEA:13065"/>
        <dbReference type="ChEBI" id="CHEBI:15377"/>
        <dbReference type="ChEBI" id="CHEBI:15378"/>
        <dbReference type="ChEBI" id="CHEBI:30616"/>
        <dbReference type="ChEBI" id="CHEBI:43474"/>
        <dbReference type="ChEBI" id="CHEBI:456216"/>
        <dbReference type="EC" id="3.6.4.13"/>
    </reaction>
</comment>
<comment type="subunit">
    <text evidence="1">Component of the U5 snRNP complex.</text>
</comment>
<comment type="subcellular location">
    <subcellularLocation>
        <location evidence="1">Cytoplasm</location>
    </subcellularLocation>
    <subcellularLocation>
        <location evidence="1">Nucleus</location>
    </subcellularLocation>
</comment>
<comment type="domain">
    <text>The Q motif is unique to and characteristic of the DEAD box family of RNA helicases and controls ATP binding and hydrolysis.</text>
</comment>
<comment type="similarity">
    <text evidence="5">Belongs to the DEAD box helicase family. DDX23/PRP28 subfamily.</text>
</comment>